<reference key="1">
    <citation type="journal article" date="2007" name="Genome Biol.">
        <title>Genome analysis and genome-wide proteomics of Thermococcus gammatolerans, the most radioresistant organism known amongst the Archaea.</title>
        <authorList>
            <person name="Zivanovic Y."/>
            <person name="Armengaud J."/>
            <person name="Lagorce A."/>
            <person name="Leplat C."/>
            <person name="Guerin P."/>
            <person name="Dutertre M."/>
            <person name="Anthouard V."/>
            <person name="Forterre P."/>
            <person name="Wincker P."/>
            <person name="Confalonieri F."/>
        </authorList>
    </citation>
    <scope>NUCLEOTIDE SEQUENCE [LARGE SCALE GENOMIC DNA]</scope>
    <source>
        <strain>DSM 15229 / JCM 11827 / EJ3</strain>
    </source>
</reference>
<dbReference type="EC" id="2.5.1.78" evidence="1"/>
<dbReference type="EMBL" id="CP001398">
    <property type="protein sequence ID" value="ACS33759.1"/>
    <property type="molecule type" value="Genomic_DNA"/>
</dbReference>
<dbReference type="RefSeq" id="WP_015858871.1">
    <property type="nucleotide sequence ID" value="NC_012804.1"/>
</dbReference>
<dbReference type="SMR" id="C5A697"/>
<dbReference type="STRING" id="593117.TGAM_1257"/>
<dbReference type="PaxDb" id="593117-TGAM_1257"/>
<dbReference type="GeneID" id="7987903"/>
<dbReference type="KEGG" id="tga:TGAM_1257"/>
<dbReference type="PATRIC" id="fig|593117.10.peg.1256"/>
<dbReference type="eggNOG" id="arCOG01323">
    <property type="taxonomic scope" value="Archaea"/>
</dbReference>
<dbReference type="HOGENOM" id="CLU_089358_1_1_2"/>
<dbReference type="OrthoDB" id="7610at2157"/>
<dbReference type="UniPathway" id="UPA00275">
    <property type="reaction ID" value="UER00404"/>
</dbReference>
<dbReference type="Proteomes" id="UP000001488">
    <property type="component" value="Chromosome"/>
</dbReference>
<dbReference type="GO" id="GO:0009349">
    <property type="term" value="C:riboflavin synthase complex"/>
    <property type="evidence" value="ECO:0007669"/>
    <property type="project" value="InterPro"/>
</dbReference>
<dbReference type="GO" id="GO:0000906">
    <property type="term" value="F:6,7-dimethyl-8-ribityllumazine synthase activity"/>
    <property type="evidence" value="ECO:0007669"/>
    <property type="project" value="UniProtKB-UniRule"/>
</dbReference>
<dbReference type="GO" id="GO:0009231">
    <property type="term" value="P:riboflavin biosynthetic process"/>
    <property type="evidence" value="ECO:0007669"/>
    <property type="project" value="UniProtKB-UniRule"/>
</dbReference>
<dbReference type="CDD" id="cd09209">
    <property type="entry name" value="Lumazine_synthase-I"/>
    <property type="match status" value="1"/>
</dbReference>
<dbReference type="FunFam" id="3.40.50.960:FF:000001">
    <property type="entry name" value="6,7-dimethyl-8-ribityllumazine synthase"/>
    <property type="match status" value="1"/>
</dbReference>
<dbReference type="Gene3D" id="3.40.50.960">
    <property type="entry name" value="Lumazine/riboflavin synthase"/>
    <property type="match status" value="1"/>
</dbReference>
<dbReference type="HAMAP" id="MF_00178">
    <property type="entry name" value="Lumazine_synth"/>
    <property type="match status" value="1"/>
</dbReference>
<dbReference type="InterPro" id="IPR034964">
    <property type="entry name" value="LS"/>
</dbReference>
<dbReference type="InterPro" id="IPR002180">
    <property type="entry name" value="LS/RS"/>
</dbReference>
<dbReference type="InterPro" id="IPR036467">
    <property type="entry name" value="LS/RS_sf"/>
</dbReference>
<dbReference type="NCBIfam" id="TIGR00114">
    <property type="entry name" value="lumazine-synth"/>
    <property type="match status" value="1"/>
</dbReference>
<dbReference type="PANTHER" id="PTHR21058:SF0">
    <property type="entry name" value="6,7-DIMETHYL-8-RIBITYLLUMAZINE SYNTHASE"/>
    <property type="match status" value="1"/>
</dbReference>
<dbReference type="PANTHER" id="PTHR21058">
    <property type="entry name" value="6,7-DIMETHYL-8-RIBITYLLUMAZINE SYNTHASE DMRL SYNTHASE LUMAZINE SYNTHASE"/>
    <property type="match status" value="1"/>
</dbReference>
<dbReference type="Pfam" id="PF00885">
    <property type="entry name" value="DMRL_synthase"/>
    <property type="match status" value="1"/>
</dbReference>
<dbReference type="SUPFAM" id="SSF52121">
    <property type="entry name" value="Lumazine synthase"/>
    <property type="match status" value="1"/>
</dbReference>
<proteinExistence type="inferred from homology"/>
<accession>C5A697</accession>
<keyword id="KW-1185">Reference proteome</keyword>
<keyword id="KW-0686">Riboflavin biosynthesis</keyword>
<keyword id="KW-0808">Transferase</keyword>
<gene>
    <name evidence="1" type="primary">ribH</name>
    <name type="ordered locus">TGAM_1257</name>
</gene>
<evidence type="ECO:0000255" key="1">
    <source>
        <dbReference type="HAMAP-Rule" id="MF_00178"/>
    </source>
</evidence>
<comment type="function">
    <text evidence="1">Catalyzes the formation of 6,7-dimethyl-8-ribityllumazine by condensation of 5-amino-6-(D-ribitylamino)uracil with 3,4-dihydroxy-2-butanone 4-phosphate. This is the penultimate step in the biosynthesis of riboflavin.</text>
</comment>
<comment type="catalytic activity">
    <reaction evidence="1">
        <text>(2S)-2-hydroxy-3-oxobutyl phosphate + 5-amino-6-(D-ribitylamino)uracil = 6,7-dimethyl-8-(1-D-ribityl)lumazine + phosphate + 2 H2O + H(+)</text>
        <dbReference type="Rhea" id="RHEA:26152"/>
        <dbReference type="ChEBI" id="CHEBI:15377"/>
        <dbReference type="ChEBI" id="CHEBI:15378"/>
        <dbReference type="ChEBI" id="CHEBI:15934"/>
        <dbReference type="ChEBI" id="CHEBI:43474"/>
        <dbReference type="ChEBI" id="CHEBI:58201"/>
        <dbReference type="ChEBI" id="CHEBI:58830"/>
        <dbReference type="EC" id="2.5.1.78"/>
    </reaction>
</comment>
<comment type="pathway">
    <text evidence="1">Cofactor biosynthesis; riboflavin biosynthesis; riboflavin from 2-hydroxy-3-oxobutyl phosphate and 5-amino-6-(D-ribitylamino)uracil: step 1/2.</text>
</comment>
<comment type="similarity">
    <text evidence="1">Belongs to the DMRL synthase family.</text>
</comment>
<protein>
    <recommendedName>
        <fullName evidence="1">6,7-dimethyl-8-ribityllumazine synthase</fullName>
        <shortName evidence="1">DMRL synthase</shortName>
        <shortName evidence="1">LS</shortName>
        <shortName evidence="1">Lumazine synthase</shortName>
        <ecNumber evidence="1">2.5.1.78</ecNumber>
    </recommendedName>
</protein>
<sequence length="154" mass="16589">MEVRTVEGGFIGKGLRMGVVVARFNDLLTGELLKGALDCFERHGVEEVDVVKVPGSFEIPLVAKKMAESGRYDAVLALGAVVRGETKHFDLVANEVAKGVANVSLDTGVPVIFGVITVEDELQGFNRAGVKSNKGFEYAMAALEMADLMRKMEE</sequence>
<feature type="chain" id="PRO_1000203807" description="6,7-dimethyl-8-ribityllumazine synthase">
    <location>
        <begin position="1"/>
        <end position="154"/>
    </location>
</feature>
<feature type="active site" description="Proton donor" evidence="1">
    <location>
        <position position="88"/>
    </location>
</feature>
<feature type="binding site" evidence="1">
    <location>
        <position position="24"/>
    </location>
    <ligand>
        <name>5-amino-6-(D-ribitylamino)uracil</name>
        <dbReference type="ChEBI" id="CHEBI:15934"/>
    </ligand>
</feature>
<feature type="binding site" evidence="1">
    <location>
        <begin position="56"/>
        <end position="58"/>
    </location>
    <ligand>
        <name>5-amino-6-(D-ribitylamino)uracil</name>
        <dbReference type="ChEBI" id="CHEBI:15934"/>
    </ligand>
</feature>
<feature type="binding site" evidence="1">
    <location>
        <begin position="80"/>
        <end position="82"/>
    </location>
    <ligand>
        <name>5-amino-6-(D-ribitylamino)uracil</name>
        <dbReference type="ChEBI" id="CHEBI:15934"/>
    </ligand>
</feature>
<feature type="binding site" evidence="1">
    <location>
        <begin position="85"/>
        <end position="86"/>
    </location>
    <ligand>
        <name>(2S)-2-hydroxy-3-oxobutyl phosphate</name>
        <dbReference type="ChEBI" id="CHEBI:58830"/>
    </ligand>
</feature>
<feature type="binding site" evidence="1">
    <location>
        <position position="113"/>
    </location>
    <ligand>
        <name>5-amino-6-(D-ribitylamino)uracil</name>
        <dbReference type="ChEBI" id="CHEBI:15934"/>
    </ligand>
</feature>
<feature type="binding site" evidence="1">
    <location>
        <position position="127"/>
    </location>
    <ligand>
        <name>(2S)-2-hydroxy-3-oxobutyl phosphate</name>
        <dbReference type="ChEBI" id="CHEBI:58830"/>
    </ligand>
</feature>
<name>RISB_THEGJ</name>
<organism>
    <name type="scientific">Thermococcus gammatolerans (strain DSM 15229 / JCM 11827 / EJ3)</name>
    <dbReference type="NCBI Taxonomy" id="593117"/>
    <lineage>
        <taxon>Archaea</taxon>
        <taxon>Methanobacteriati</taxon>
        <taxon>Methanobacteriota</taxon>
        <taxon>Thermococci</taxon>
        <taxon>Thermococcales</taxon>
        <taxon>Thermococcaceae</taxon>
        <taxon>Thermococcus</taxon>
    </lineage>
</organism>